<name>T3C3_HOLCU</name>
<comment type="function">
    <text evidence="2">Insecticidal neurotoxin that induces irreversible neuromuscular blockade in house crickets (A.domesticus). Modifies presynaptic voltage-gated sodium channels (Nav), causing them to open at the normal resting potential of the nerve. This leads to spontaneous release of neurotransmitter and repetitive action potentials in motor neurons.</text>
</comment>
<comment type="subcellular location">
    <subcellularLocation>
        <location evidence="2">Secreted</location>
    </subcellularLocation>
</comment>
<comment type="tissue specificity">
    <text evidence="5">Expressed by the venom gland.</text>
</comment>
<comment type="domain">
    <text evidence="1">The presence of a 'disulfide through disulfide knot' structurally defines this protein as a knottin.</text>
</comment>
<comment type="toxic dose">
    <text evidence="2">LD(50) is 4 mg/kg in house crickets (Acheta domesticus).</text>
</comment>
<comment type="similarity">
    <text evidence="4">Belongs to the neurotoxin 07 (Beta/delta-agtx) family. 02 (aga-3) subfamily.</text>
</comment>
<protein>
    <recommendedName>
        <fullName>Mu-agatoxin-Hc1c</fullName>
        <shortName>Mu-AGTX-Hc1c</shortName>
    </recommendedName>
    <alternativeName>
        <fullName evidence="3">Curtatoxin-3</fullName>
        <shortName evidence="3">CT-III</shortName>
    </alternativeName>
</protein>
<proteinExistence type="evidence at protein level"/>
<feature type="peptide" id="PRO_0000044957" description="Mu-agatoxin-Hc1c">
    <location>
        <begin position="1"/>
        <end position="38"/>
    </location>
</feature>
<feature type="modified residue" description="Serine amide" evidence="2">
    <location>
        <position position="38"/>
    </location>
</feature>
<feature type="disulfide bond" evidence="1">
    <location>
        <begin position="3"/>
        <end position="19"/>
    </location>
</feature>
<feature type="disulfide bond" evidence="1">
    <location>
        <begin position="10"/>
        <end position="24"/>
    </location>
</feature>
<feature type="disulfide bond" evidence="1">
    <location>
        <begin position="18"/>
        <end position="34"/>
    </location>
</feature>
<feature type="disulfide bond" evidence="1">
    <location>
        <begin position="26"/>
        <end position="32"/>
    </location>
</feature>
<organism>
    <name type="scientific">Hololena curta</name>
    <name type="common">Funnel-web spider</name>
    <name type="synonym">Agelena curta</name>
    <dbReference type="NCBI Taxonomy" id="6910"/>
    <lineage>
        <taxon>Eukaryota</taxon>
        <taxon>Metazoa</taxon>
        <taxon>Ecdysozoa</taxon>
        <taxon>Arthropoda</taxon>
        <taxon>Chelicerata</taxon>
        <taxon>Arachnida</taxon>
        <taxon>Araneae</taxon>
        <taxon>Araneomorphae</taxon>
        <taxon>Entelegynae</taxon>
        <taxon>Agelenidae</taxon>
        <taxon>Hololena</taxon>
    </lineage>
</organism>
<dbReference type="PIR" id="C35030">
    <property type="entry name" value="C35030"/>
</dbReference>
<dbReference type="SMR" id="P15968"/>
<dbReference type="ArachnoServer" id="AS000296">
    <property type="toxin name" value="mu-agatoxin-Hc1c"/>
</dbReference>
<dbReference type="GO" id="GO:0005576">
    <property type="term" value="C:extracellular region"/>
    <property type="evidence" value="ECO:0007669"/>
    <property type="project" value="UniProtKB-SubCell"/>
</dbReference>
<dbReference type="GO" id="GO:0017080">
    <property type="term" value="F:sodium channel regulator activity"/>
    <property type="evidence" value="ECO:0007669"/>
    <property type="project" value="UniProtKB-KW"/>
</dbReference>
<dbReference type="GO" id="GO:0090729">
    <property type="term" value="F:toxin activity"/>
    <property type="evidence" value="ECO:0007669"/>
    <property type="project" value="UniProtKB-KW"/>
</dbReference>
<dbReference type="InterPro" id="IPR016328">
    <property type="entry name" value="Beta/delta-agatoxin_fam"/>
</dbReference>
<dbReference type="Pfam" id="PF05980">
    <property type="entry name" value="Toxin_7"/>
    <property type="match status" value="1"/>
</dbReference>
<dbReference type="PIRSF" id="PIRSF001882">
    <property type="entry name" value="Curtatoxin"/>
    <property type="match status" value="1"/>
</dbReference>
<dbReference type="SUPFAM" id="SSF57059">
    <property type="entry name" value="omega toxin-like"/>
    <property type="match status" value="1"/>
</dbReference>
<dbReference type="PROSITE" id="PS60015">
    <property type="entry name" value="MU_AGATOXIN"/>
    <property type="match status" value="1"/>
</dbReference>
<accession>P15968</accession>
<keyword id="KW-0027">Amidation</keyword>
<keyword id="KW-0903">Direct protein sequencing</keyword>
<keyword id="KW-1015">Disulfide bond</keyword>
<keyword id="KW-0872">Ion channel impairing toxin</keyword>
<keyword id="KW-0960">Knottin</keyword>
<keyword id="KW-0528">Neurotoxin</keyword>
<keyword id="KW-0964">Secreted</keyword>
<keyword id="KW-0800">Toxin</keyword>
<keyword id="KW-0738">Voltage-gated sodium channel impairing toxin</keyword>
<evidence type="ECO:0000250" key="1"/>
<evidence type="ECO:0000269" key="2">
    <source>
    </source>
</evidence>
<evidence type="ECO:0000303" key="3">
    <source>
    </source>
</evidence>
<evidence type="ECO:0000305" key="4"/>
<evidence type="ECO:0000305" key="5">
    <source>
    </source>
</evidence>
<sequence>ADCVGDGQKCADWFGPYCCSGYYCSCRSMPYCRCRSDS</sequence>
<reference key="1">
    <citation type="journal article" date="1990" name="J. Biol. Chem.">
        <title>Curtatoxins. Neurotoxic insecticidal polypeptides isolated from the funnel-web spider Hololena curta.</title>
        <authorList>
            <person name="Stapleton A."/>
            <person name="Blankenship D.T."/>
            <person name="Ackermann D.L."/>
            <person name="Chen T.-M."/>
            <person name="Gorder G.W."/>
            <person name="Manley G.D."/>
            <person name="Palfreyman M.G."/>
            <person name="Coutant J.E."/>
            <person name="Cardin A.D."/>
        </authorList>
    </citation>
    <scope>PROTEIN SEQUENCE</scope>
    <scope>FUNCTION</scope>
    <scope>SUBCELLULAR LOCATION</scope>
    <scope>AMIDATION AT SER-38</scope>
    <scope>TOXIC DOSE</scope>
    <source>
        <tissue>Venom</tissue>
    </source>
</reference>
<reference key="2">
    <citation type="journal article" date="2004" name="Toxicon">
        <title>Agatoxins: ion channel specific toxins from the American funnel web spider, Agelenopsis aperta.</title>
        <authorList>
            <person name="Adams M.E."/>
        </authorList>
    </citation>
    <scope>REVIEW</scope>
</reference>